<evidence type="ECO:0000255" key="1">
    <source>
        <dbReference type="HAMAP-Rule" id="MF_01082"/>
    </source>
</evidence>
<comment type="function">
    <text evidence="1">Could be responsible for synthesis of pseudouridine from uracil-13 in transfer RNAs.</text>
</comment>
<comment type="catalytic activity">
    <reaction evidence="1">
        <text>uridine(13) in tRNA = pseudouridine(13) in tRNA</text>
        <dbReference type="Rhea" id="RHEA:42540"/>
        <dbReference type="Rhea" id="RHEA-COMP:10105"/>
        <dbReference type="Rhea" id="RHEA-COMP:10106"/>
        <dbReference type="ChEBI" id="CHEBI:65314"/>
        <dbReference type="ChEBI" id="CHEBI:65315"/>
        <dbReference type="EC" id="5.4.99.27"/>
    </reaction>
</comment>
<comment type="similarity">
    <text evidence="1">Belongs to the pseudouridine synthase TruD family.</text>
</comment>
<name>TRUD_METBF</name>
<organism>
    <name type="scientific">Methanosarcina barkeri (strain Fusaro / DSM 804)</name>
    <dbReference type="NCBI Taxonomy" id="269797"/>
    <lineage>
        <taxon>Archaea</taxon>
        <taxon>Methanobacteriati</taxon>
        <taxon>Methanobacteriota</taxon>
        <taxon>Stenosarchaea group</taxon>
        <taxon>Methanomicrobia</taxon>
        <taxon>Methanosarcinales</taxon>
        <taxon>Methanosarcinaceae</taxon>
        <taxon>Methanosarcina</taxon>
    </lineage>
</organism>
<sequence>MQVPEIEKQIGITLYSTDTDGLGGQLRQEVEDFIVKEITNREEGQEGKYLILELIKRDWDTHHLTRTLAKILQVSQKRISVAGTKDKRALTTQKISIFDIDAQKIEKIHLKDVELKVLGRSRKSVELGDLWGNNFRITIRNITHSSEEIHKLLEKTTNEILAQNGVPNFFGIQRFGSVRPVTHLVGKAIVEGDFEKAALLYIAEPFPDEPEDTRKARQFVKETLDFKEGLKIYPLHLGHERAMMNHLIANPDDFAGAFLVLPKNLYRMFVHGYQSYIYNIILCRRIEKGLSLNEAVEGDVVCFKNEHGLPDSSKTEKATTETVNAMNRLIKKKRAFITAPLPGHNTEFASGIPGEVEQAVLDELKVPLQGFNIEETPEMSSKGTRRELLLQVEPKFEVAEDELNPGKLKAVLEFMLPKGSYATTVLREYMKVDPLQMS</sequence>
<accession>Q466V2</accession>
<protein>
    <recommendedName>
        <fullName evidence="1">Probable tRNA pseudouridine synthase D</fullName>
        <ecNumber evidence="1">5.4.99.27</ecNumber>
    </recommendedName>
    <alternativeName>
        <fullName evidence="1">tRNA pseudouridine(13) synthase</fullName>
    </alternativeName>
    <alternativeName>
        <fullName evidence="1">tRNA pseudouridylate synthase D</fullName>
    </alternativeName>
    <alternativeName>
        <fullName evidence="1">tRNA-uridine isomerase D</fullName>
    </alternativeName>
</protein>
<feature type="chain" id="PRO_0000230159" description="Probable tRNA pseudouridine synthase D">
    <location>
        <begin position="1"/>
        <end position="438"/>
    </location>
</feature>
<feature type="domain" description="TRUD" evidence="1">
    <location>
        <begin position="165"/>
        <end position="390"/>
    </location>
</feature>
<feature type="active site" description="Nucleophile" evidence="1">
    <location>
        <position position="86"/>
    </location>
</feature>
<keyword id="KW-0413">Isomerase</keyword>
<keyword id="KW-0819">tRNA processing</keyword>
<reference key="1">
    <citation type="journal article" date="2006" name="J. Bacteriol.">
        <title>The Methanosarcina barkeri genome: comparative analysis with Methanosarcina acetivorans and Methanosarcina mazei reveals extensive rearrangement within methanosarcinal genomes.</title>
        <authorList>
            <person name="Maeder D.L."/>
            <person name="Anderson I."/>
            <person name="Brettin T.S."/>
            <person name="Bruce D.C."/>
            <person name="Gilna P."/>
            <person name="Han C.S."/>
            <person name="Lapidus A."/>
            <person name="Metcalf W.W."/>
            <person name="Saunders E."/>
            <person name="Tapia R."/>
            <person name="Sowers K.R."/>
        </authorList>
    </citation>
    <scope>NUCLEOTIDE SEQUENCE [LARGE SCALE GENOMIC DNA]</scope>
    <source>
        <strain>Fusaro / DSM 804</strain>
    </source>
</reference>
<gene>
    <name evidence="1" type="primary">truD</name>
    <name type="ordered locus">Mbar_A3206</name>
</gene>
<dbReference type="EC" id="5.4.99.27" evidence="1"/>
<dbReference type="EMBL" id="CP000099">
    <property type="protein sequence ID" value="AAZ72090.1"/>
    <property type="molecule type" value="Genomic_DNA"/>
</dbReference>
<dbReference type="SMR" id="Q466V2"/>
<dbReference type="STRING" id="269797.Mbar_A3206"/>
<dbReference type="PaxDb" id="269797-Mbar_A3206"/>
<dbReference type="KEGG" id="mba:Mbar_A3206"/>
<dbReference type="eggNOG" id="arCOG04252">
    <property type="taxonomic scope" value="Archaea"/>
</dbReference>
<dbReference type="HOGENOM" id="CLU_005281_4_1_2"/>
<dbReference type="OrthoDB" id="1798at2157"/>
<dbReference type="GO" id="GO:0003723">
    <property type="term" value="F:RNA binding"/>
    <property type="evidence" value="ECO:0007669"/>
    <property type="project" value="InterPro"/>
</dbReference>
<dbReference type="GO" id="GO:0160150">
    <property type="term" value="F:tRNA pseudouridine(13) synthase activity"/>
    <property type="evidence" value="ECO:0007669"/>
    <property type="project" value="UniProtKB-EC"/>
</dbReference>
<dbReference type="GO" id="GO:0031119">
    <property type="term" value="P:tRNA pseudouridine synthesis"/>
    <property type="evidence" value="ECO:0007669"/>
    <property type="project" value="UniProtKB-UniRule"/>
</dbReference>
<dbReference type="CDD" id="cd02577">
    <property type="entry name" value="PSTD1"/>
    <property type="match status" value="1"/>
</dbReference>
<dbReference type="FunFam" id="3.30.2350.20:FF:000023">
    <property type="entry name" value="Probable tRNA pseudouridine synthase D"/>
    <property type="match status" value="1"/>
</dbReference>
<dbReference type="FunFam" id="3.30.70.3160:FF:000001">
    <property type="entry name" value="Probable tRNA pseudouridine synthase D"/>
    <property type="match status" value="1"/>
</dbReference>
<dbReference type="Gene3D" id="1.10.1510.30">
    <property type="match status" value="1"/>
</dbReference>
<dbReference type="Gene3D" id="3.30.70.3160">
    <property type="match status" value="1"/>
</dbReference>
<dbReference type="Gene3D" id="3.30.2350.20">
    <property type="entry name" value="TruD, catalytic domain"/>
    <property type="match status" value="1"/>
</dbReference>
<dbReference type="HAMAP" id="MF_01082">
    <property type="entry name" value="TruD"/>
    <property type="match status" value="1"/>
</dbReference>
<dbReference type="InterPro" id="IPR020103">
    <property type="entry name" value="PsdUridine_synth_cat_dom_sf"/>
</dbReference>
<dbReference type="InterPro" id="IPR001656">
    <property type="entry name" value="PsdUridine_synth_TruD"/>
</dbReference>
<dbReference type="InterPro" id="IPR020119">
    <property type="entry name" value="PsdUridine_synth_TruD_CS"/>
</dbReference>
<dbReference type="InterPro" id="IPR011760">
    <property type="entry name" value="PsdUridine_synth_TruD_insert"/>
</dbReference>
<dbReference type="InterPro" id="IPR042214">
    <property type="entry name" value="TruD_catalytic"/>
</dbReference>
<dbReference type="NCBIfam" id="TIGR00094">
    <property type="entry name" value="tRNA_TruD_broad"/>
    <property type="match status" value="1"/>
</dbReference>
<dbReference type="PANTHER" id="PTHR13326:SF21">
    <property type="entry name" value="PSEUDOURIDYLATE SYNTHASE PUS7L"/>
    <property type="match status" value="1"/>
</dbReference>
<dbReference type="PANTHER" id="PTHR13326">
    <property type="entry name" value="TRNA PSEUDOURIDINE SYNTHASE D"/>
    <property type="match status" value="1"/>
</dbReference>
<dbReference type="Pfam" id="PF01142">
    <property type="entry name" value="TruD"/>
    <property type="match status" value="1"/>
</dbReference>
<dbReference type="PIRSF" id="PIRSF037016">
    <property type="entry name" value="Pseudouridin_synth_euk_prd"/>
    <property type="match status" value="1"/>
</dbReference>
<dbReference type="SUPFAM" id="SSF55120">
    <property type="entry name" value="Pseudouridine synthase"/>
    <property type="match status" value="1"/>
</dbReference>
<dbReference type="PROSITE" id="PS50984">
    <property type="entry name" value="TRUD"/>
    <property type="match status" value="1"/>
</dbReference>
<dbReference type="PROSITE" id="PS01268">
    <property type="entry name" value="UPF0024"/>
    <property type="match status" value="1"/>
</dbReference>
<proteinExistence type="inferred from homology"/>